<proteinExistence type="inferred from homology"/>
<evidence type="ECO:0000255" key="1">
    <source>
        <dbReference type="HAMAP-Rule" id="MF_00423"/>
    </source>
</evidence>
<reference key="1">
    <citation type="journal article" date="2003" name="Science">
        <title>Genome of Geobacter sulfurreducens: metal reduction in subsurface environments.</title>
        <authorList>
            <person name="Methe B.A."/>
            <person name="Nelson K.E."/>
            <person name="Eisen J.A."/>
            <person name="Paulsen I.T."/>
            <person name="Nelson W.C."/>
            <person name="Heidelberg J.F."/>
            <person name="Wu D."/>
            <person name="Wu M."/>
            <person name="Ward N.L."/>
            <person name="Beanan M.J."/>
            <person name="Dodson R.J."/>
            <person name="Madupu R."/>
            <person name="Brinkac L.M."/>
            <person name="Daugherty S.C."/>
            <person name="DeBoy R.T."/>
            <person name="Durkin A.S."/>
            <person name="Gwinn M.L."/>
            <person name="Kolonay J.F."/>
            <person name="Sullivan S.A."/>
            <person name="Haft D.H."/>
            <person name="Selengut J."/>
            <person name="Davidsen T.M."/>
            <person name="Zafar N."/>
            <person name="White O."/>
            <person name="Tran B."/>
            <person name="Romero C."/>
            <person name="Forberger H.A."/>
            <person name="Weidman J.F."/>
            <person name="Khouri H.M."/>
            <person name="Feldblyum T.V."/>
            <person name="Utterback T.R."/>
            <person name="Van Aken S.E."/>
            <person name="Lovley D.R."/>
            <person name="Fraser C.M."/>
        </authorList>
    </citation>
    <scope>NUCLEOTIDE SEQUENCE [LARGE SCALE GENOMIC DNA]</scope>
    <source>
        <strain>ATCC 51573 / DSM 12127 / PCA</strain>
    </source>
</reference>
<sequence length="462" mass="49936">MTIFSRIPKVDRILEQDEVRRLLADHPRPTVLAAVRTALDALRAEARAGSLREQDLADGAVAGRVGREVARSTACSLRRVVNGTGVVIHTNLGRSPLAERVRQRVDDTAYGYSNLEFDLERGERGSRYSHVEKLLCELTGAEAALVVNNNAAAVLLALSALAGGKEVIVSRGELVEIGGSFRIPDVMQQGGAVLREVGTTNRTHSRDYRQAVTSETGLLLKVHSSNFAVVGFTAEVTAPEMVAIGRELGLPVMADIGSGCLIDLSRFGIRGEPTVQEFVSVGVDVVTFSGDKLLGGPQAGIIVGRKAYVDPLKKHPLLRAIRIDKLTLAALEGTLRLYRDERQALAEVPTLRMLTASAEELRLRARQFMRRLRRGVPSSVRLASLDGVSQVGGGAYPLLELPTTLIAVDVDGVSPQEMEARLRRMTVPVVGRINRGRFLLDARTLLDDDAPAVISALRELAS</sequence>
<comment type="function">
    <text evidence="1">Converts seryl-tRNA(Sec) to selenocysteinyl-tRNA(Sec) required for selenoprotein biosynthesis.</text>
</comment>
<comment type="catalytic activity">
    <reaction evidence="1">
        <text>L-seryl-tRNA(Sec) + selenophosphate + H(+) = L-selenocysteinyl-tRNA(Sec) + phosphate</text>
        <dbReference type="Rhea" id="RHEA:22728"/>
        <dbReference type="Rhea" id="RHEA-COMP:9742"/>
        <dbReference type="Rhea" id="RHEA-COMP:9743"/>
        <dbReference type="ChEBI" id="CHEBI:15378"/>
        <dbReference type="ChEBI" id="CHEBI:16144"/>
        <dbReference type="ChEBI" id="CHEBI:43474"/>
        <dbReference type="ChEBI" id="CHEBI:78533"/>
        <dbReference type="ChEBI" id="CHEBI:78573"/>
        <dbReference type="EC" id="2.9.1.1"/>
    </reaction>
</comment>
<comment type="cofactor">
    <cofactor evidence="1">
        <name>pyridoxal 5'-phosphate</name>
        <dbReference type="ChEBI" id="CHEBI:597326"/>
    </cofactor>
</comment>
<comment type="pathway">
    <text evidence="1">Aminoacyl-tRNA biosynthesis; selenocysteinyl-tRNA(Sec) biosynthesis; selenocysteinyl-tRNA(Sec) from L-seryl-tRNA(Sec) (bacterial route): step 1/1.</text>
</comment>
<comment type="subcellular location">
    <subcellularLocation>
        <location evidence="1">Cytoplasm</location>
    </subcellularLocation>
</comment>
<comment type="similarity">
    <text evidence="1">Belongs to the SelA family.</text>
</comment>
<accession>P61736</accession>
<dbReference type="EC" id="2.9.1.1" evidence="1"/>
<dbReference type="EMBL" id="AE017180">
    <property type="protein sequence ID" value="AAR36759.1"/>
    <property type="molecule type" value="Genomic_DNA"/>
</dbReference>
<dbReference type="RefSeq" id="NP_954409.1">
    <property type="nucleotide sequence ID" value="NC_002939.5"/>
</dbReference>
<dbReference type="RefSeq" id="WP_010943980.1">
    <property type="nucleotide sequence ID" value="NC_002939.5"/>
</dbReference>
<dbReference type="SMR" id="P61736"/>
<dbReference type="FunCoup" id="P61736">
    <property type="interactions" value="113"/>
</dbReference>
<dbReference type="STRING" id="243231.GSU3369"/>
<dbReference type="EnsemblBacteria" id="AAR36759">
    <property type="protein sequence ID" value="AAR36759"/>
    <property type="gene ID" value="GSU3369"/>
</dbReference>
<dbReference type="KEGG" id="gsu:GSU3369"/>
<dbReference type="PATRIC" id="fig|243231.5.peg.3391"/>
<dbReference type="eggNOG" id="COG1921">
    <property type="taxonomic scope" value="Bacteria"/>
</dbReference>
<dbReference type="HOGENOM" id="CLU_038142_1_0_7"/>
<dbReference type="InParanoid" id="P61736"/>
<dbReference type="OrthoDB" id="9787096at2"/>
<dbReference type="UniPathway" id="UPA00906">
    <property type="reaction ID" value="UER00896"/>
</dbReference>
<dbReference type="Proteomes" id="UP000000577">
    <property type="component" value="Chromosome"/>
</dbReference>
<dbReference type="GO" id="GO:0005737">
    <property type="term" value="C:cytoplasm"/>
    <property type="evidence" value="ECO:0007669"/>
    <property type="project" value="UniProtKB-SubCell"/>
</dbReference>
<dbReference type="GO" id="GO:0004125">
    <property type="term" value="F:L-seryl-tRNA(Sec) selenium transferase activity"/>
    <property type="evidence" value="ECO:0000318"/>
    <property type="project" value="GO_Central"/>
</dbReference>
<dbReference type="GO" id="GO:0001717">
    <property type="term" value="P:conversion of seryl-tRNAsec to selenocys-tRNAsec"/>
    <property type="evidence" value="ECO:0007669"/>
    <property type="project" value="UniProtKB-UniRule"/>
</dbReference>
<dbReference type="GO" id="GO:0001514">
    <property type="term" value="P:selenocysteine incorporation"/>
    <property type="evidence" value="ECO:0007669"/>
    <property type="project" value="UniProtKB-UniRule"/>
</dbReference>
<dbReference type="Gene3D" id="3.90.1150.180">
    <property type="match status" value="1"/>
</dbReference>
<dbReference type="Gene3D" id="3.40.640.10">
    <property type="entry name" value="Type I PLP-dependent aspartate aminotransferase-like (Major domain)"/>
    <property type="match status" value="1"/>
</dbReference>
<dbReference type="HAMAP" id="MF_00423">
    <property type="entry name" value="SelA"/>
    <property type="match status" value="1"/>
</dbReference>
<dbReference type="InterPro" id="IPR015424">
    <property type="entry name" value="PyrdxlP-dep_Trfase"/>
</dbReference>
<dbReference type="InterPro" id="IPR015421">
    <property type="entry name" value="PyrdxlP-dep_Trfase_major"/>
</dbReference>
<dbReference type="InterPro" id="IPR018319">
    <property type="entry name" value="SelA-like"/>
</dbReference>
<dbReference type="InterPro" id="IPR004534">
    <property type="entry name" value="SelA_trans"/>
</dbReference>
<dbReference type="InterPro" id="IPR025862">
    <property type="entry name" value="SelA_trans_N_dom"/>
</dbReference>
<dbReference type="NCBIfam" id="TIGR00474">
    <property type="entry name" value="selA"/>
    <property type="match status" value="1"/>
</dbReference>
<dbReference type="PANTHER" id="PTHR32328">
    <property type="entry name" value="L-SERYL-TRNA(SEC) SELENIUM TRANSFERASE"/>
    <property type="match status" value="1"/>
</dbReference>
<dbReference type="PANTHER" id="PTHR32328:SF0">
    <property type="entry name" value="L-SERYL-TRNA(SEC) SELENIUM TRANSFERASE"/>
    <property type="match status" value="1"/>
</dbReference>
<dbReference type="Pfam" id="PF12390">
    <property type="entry name" value="Se-cys_synth_N"/>
    <property type="match status" value="1"/>
</dbReference>
<dbReference type="Pfam" id="PF03841">
    <property type="entry name" value="SelA"/>
    <property type="match status" value="1"/>
</dbReference>
<dbReference type="SUPFAM" id="SSF53383">
    <property type="entry name" value="PLP-dependent transferases"/>
    <property type="match status" value="1"/>
</dbReference>
<keyword id="KW-0963">Cytoplasm</keyword>
<keyword id="KW-0648">Protein biosynthesis</keyword>
<keyword id="KW-0663">Pyridoxal phosphate</keyword>
<keyword id="KW-1185">Reference proteome</keyword>
<keyword id="KW-0711">Selenium</keyword>
<keyword id="KW-0808">Transferase</keyword>
<name>SELA_GEOSL</name>
<organism>
    <name type="scientific">Geobacter sulfurreducens (strain ATCC 51573 / DSM 12127 / PCA)</name>
    <dbReference type="NCBI Taxonomy" id="243231"/>
    <lineage>
        <taxon>Bacteria</taxon>
        <taxon>Pseudomonadati</taxon>
        <taxon>Thermodesulfobacteriota</taxon>
        <taxon>Desulfuromonadia</taxon>
        <taxon>Geobacterales</taxon>
        <taxon>Geobacteraceae</taxon>
        <taxon>Geobacter</taxon>
    </lineage>
</organism>
<protein>
    <recommendedName>
        <fullName evidence="1">L-seryl-tRNA(Sec) selenium transferase</fullName>
        <ecNumber evidence="1">2.9.1.1</ecNumber>
    </recommendedName>
    <alternativeName>
        <fullName evidence="1">Selenocysteine synthase</fullName>
        <shortName evidence="1">Sec synthase</shortName>
    </alternativeName>
    <alternativeName>
        <fullName evidence="1">Selenocysteinyl-tRNA(Sec) synthase</fullName>
    </alternativeName>
</protein>
<feature type="chain" id="PRO_0000189603" description="L-seryl-tRNA(Sec) selenium transferase">
    <location>
        <begin position="1"/>
        <end position="462"/>
    </location>
</feature>
<feature type="modified residue" description="N6-(pyridoxal phosphate)lysine" evidence="1">
    <location>
        <position position="292"/>
    </location>
</feature>
<gene>
    <name evidence="1" type="primary">selA</name>
    <name type="ordered locus">GSU3369</name>
</gene>